<feature type="chain" id="PRO_1000164136" description="Phosphatidylglycerol--prolipoprotein diacylglyceryl transferase">
    <location>
        <begin position="1"/>
        <end position="291"/>
    </location>
</feature>
<feature type="transmembrane region" description="Helical" evidence="1">
    <location>
        <begin position="21"/>
        <end position="41"/>
    </location>
</feature>
<feature type="transmembrane region" description="Helical" evidence="1">
    <location>
        <begin position="60"/>
        <end position="80"/>
    </location>
</feature>
<feature type="transmembrane region" description="Helical" evidence="1">
    <location>
        <begin position="96"/>
        <end position="116"/>
    </location>
</feature>
<feature type="transmembrane region" description="Helical" evidence="1">
    <location>
        <begin position="225"/>
        <end position="245"/>
    </location>
</feature>
<feature type="transmembrane region" description="Helical" evidence="1">
    <location>
        <begin position="260"/>
        <end position="280"/>
    </location>
</feature>
<feature type="binding site" evidence="1">
    <location>
        <position position="143"/>
    </location>
    <ligand>
        <name>a 1,2-diacyl-sn-glycero-3-phospho-(1'-sn-glycerol)</name>
        <dbReference type="ChEBI" id="CHEBI:64716"/>
    </ligand>
</feature>
<sequence length="291" mass="33108">MTSSYLHFPEFDPVIFSIGPVALHWYGLMYLVGFIFAMWLATRRANRPGSGWTKNEVENLLYAGFLGVFLGGRIGYVLFYNFPQFMADPLYLFRVWDGGMSFHGGLIGVIVVMIIFARRTKRSFFQVSDFIAPLIPFGLGAGRLGNFINGELWGRVDPNFPFAMLFPGSRTEDILLLQTNPQWQSIFDTYGVLPRHPSQLYELLLEGVVLFIILNLYIRKPRPMGAVSGLFLIGYGAFRIIVEFFRQPDAQFTGAWVQYISMGQILSIPMIVAGVIMMVWAYRRSPQQHVS</sequence>
<comment type="function">
    <text evidence="1">Catalyzes the transfer of the diacylglyceryl group from phosphatidylglycerol to the sulfhydryl group of the N-terminal cysteine of a prolipoprotein, the first step in the formation of mature lipoproteins.</text>
</comment>
<comment type="catalytic activity">
    <reaction evidence="1">
        <text>L-cysteinyl-[prolipoprotein] + a 1,2-diacyl-sn-glycero-3-phospho-(1'-sn-glycerol) = an S-1,2-diacyl-sn-glyceryl-L-cysteinyl-[prolipoprotein] + sn-glycerol 1-phosphate + H(+)</text>
        <dbReference type="Rhea" id="RHEA:56712"/>
        <dbReference type="Rhea" id="RHEA-COMP:14679"/>
        <dbReference type="Rhea" id="RHEA-COMP:14680"/>
        <dbReference type="ChEBI" id="CHEBI:15378"/>
        <dbReference type="ChEBI" id="CHEBI:29950"/>
        <dbReference type="ChEBI" id="CHEBI:57685"/>
        <dbReference type="ChEBI" id="CHEBI:64716"/>
        <dbReference type="ChEBI" id="CHEBI:140658"/>
        <dbReference type="EC" id="2.5.1.145"/>
    </reaction>
</comment>
<comment type="pathway">
    <text evidence="1">Protein modification; lipoprotein biosynthesis (diacylglyceryl transfer).</text>
</comment>
<comment type="subcellular location">
    <subcellularLocation>
        <location evidence="1">Cell inner membrane</location>
        <topology evidence="1">Multi-pass membrane protein</topology>
    </subcellularLocation>
</comment>
<comment type="similarity">
    <text evidence="1">Belongs to the Lgt family.</text>
</comment>
<dbReference type="EC" id="2.5.1.145" evidence="1"/>
<dbReference type="EMBL" id="FM180568">
    <property type="protein sequence ID" value="CAS10645.1"/>
    <property type="molecule type" value="Genomic_DNA"/>
</dbReference>
<dbReference type="RefSeq" id="WP_000204658.1">
    <property type="nucleotide sequence ID" value="NC_011601.1"/>
</dbReference>
<dbReference type="SMR" id="B7UHP5"/>
<dbReference type="GeneID" id="93779170"/>
<dbReference type="KEGG" id="ecg:E2348C_3097"/>
<dbReference type="HOGENOM" id="CLU_013386_1_0_6"/>
<dbReference type="UniPathway" id="UPA00664"/>
<dbReference type="Proteomes" id="UP000008205">
    <property type="component" value="Chromosome"/>
</dbReference>
<dbReference type="GO" id="GO:0005886">
    <property type="term" value="C:plasma membrane"/>
    <property type="evidence" value="ECO:0007669"/>
    <property type="project" value="UniProtKB-SubCell"/>
</dbReference>
<dbReference type="GO" id="GO:0008961">
    <property type="term" value="F:phosphatidylglycerol-prolipoprotein diacylglyceryl transferase activity"/>
    <property type="evidence" value="ECO:0007669"/>
    <property type="project" value="UniProtKB-UniRule"/>
</dbReference>
<dbReference type="GO" id="GO:0042158">
    <property type="term" value="P:lipoprotein biosynthetic process"/>
    <property type="evidence" value="ECO:0007669"/>
    <property type="project" value="UniProtKB-UniRule"/>
</dbReference>
<dbReference type="HAMAP" id="MF_01147">
    <property type="entry name" value="Lgt"/>
    <property type="match status" value="1"/>
</dbReference>
<dbReference type="InterPro" id="IPR001640">
    <property type="entry name" value="Lgt"/>
</dbReference>
<dbReference type="NCBIfam" id="TIGR00544">
    <property type="entry name" value="lgt"/>
    <property type="match status" value="1"/>
</dbReference>
<dbReference type="PANTHER" id="PTHR30589:SF0">
    <property type="entry name" value="PHOSPHATIDYLGLYCEROL--PROLIPOPROTEIN DIACYLGLYCERYL TRANSFERASE"/>
    <property type="match status" value="1"/>
</dbReference>
<dbReference type="PANTHER" id="PTHR30589">
    <property type="entry name" value="PROLIPOPROTEIN DIACYLGLYCERYL TRANSFERASE"/>
    <property type="match status" value="1"/>
</dbReference>
<dbReference type="Pfam" id="PF01790">
    <property type="entry name" value="LGT"/>
    <property type="match status" value="1"/>
</dbReference>
<dbReference type="PROSITE" id="PS01311">
    <property type="entry name" value="LGT"/>
    <property type="match status" value="1"/>
</dbReference>
<reference key="1">
    <citation type="journal article" date="2009" name="J. Bacteriol.">
        <title>Complete genome sequence and comparative genome analysis of enteropathogenic Escherichia coli O127:H6 strain E2348/69.</title>
        <authorList>
            <person name="Iguchi A."/>
            <person name="Thomson N.R."/>
            <person name="Ogura Y."/>
            <person name="Saunders D."/>
            <person name="Ooka T."/>
            <person name="Henderson I.R."/>
            <person name="Harris D."/>
            <person name="Asadulghani M."/>
            <person name="Kurokawa K."/>
            <person name="Dean P."/>
            <person name="Kenny B."/>
            <person name="Quail M.A."/>
            <person name="Thurston S."/>
            <person name="Dougan G."/>
            <person name="Hayashi T."/>
            <person name="Parkhill J."/>
            <person name="Frankel G."/>
        </authorList>
    </citation>
    <scope>NUCLEOTIDE SEQUENCE [LARGE SCALE GENOMIC DNA]</scope>
    <source>
        <strain>E2348/69 / EPEC</strain>
    </source>
</reference>
<gene>
    <name evidence="1" type="primary">lgt</name>
    <name type="ordered locus">E2348C_3097</name>
</gene>
<accession>B7UHP5</accession>
<proteinExistence type="inferred from homology"/>
<evidence type="ECO:0000255" key="1">
    <source>
        <dbReference type="HAMAP-Rule" id="MF_01147"/>
    </source>
</evidence>
<organism>
    <name type="scientific">Escherichia coli O127:H6 (strain E2348/69 / EPEC)</name>
    <dbReference type="NCBI Taxonomy" id="574521"/>
    <lineage>
        <taxon>Bacteria</taxon>
        <taxon>Pseudomonadati</taxon>
        <taxon>Pseudomonadota</taxon>
        <taxon>Gammaproteobacteria</taxon>
        <taxon>Enterobacterales</taxon>
        <taxon>Enterobacteriaceae</taxon>
        <taxon>Escherichia</taxon>
    </lineage>
</organism>
<protein>
    <recommendedName>
        <fullName evidence="1">Phosphatidylglycerol--prolipoprotein diacylglyceryl transferase</fullName>
        <ecNumber evidence="1">2.5.1.145</ecNumber>
    </recommendedName>
</protein>
<name>LGT_ECO27</name>
<keyword id="KW-0997">Cell inner membrane</keyword>
<keyword id="KW-1003">Cell membrane</keyword>
<keyword id="KW-0472">Membrane</keyword>
<keyword id="KW-1185">Reference proteome</keyword>
<keyword id="KW-0808">Transferase</keyword>
<keyword id="KW-0812">Transmembrane</keyword>
<keyword id="KW-1133">Transmembrane helix</keyword>